<feature type="chain" id="PRO_0000451154" description="SWI/SNF chromatin-remodeling accessory subunit 1" evidence="9">
    <location>
        <begin position="1"/>
        <end position="446"/>
    </location>
</feature>
<feature type="domain" description="SWIB/MDM2" evidence="2">
    <location>
        <begin position="220"/>
        <end position="297"/>
    </location>
</feature>
<feature type="region of interest" description="Disordered" evidence="3">
    <location>
        <begin position="1"/>
        <end position="53"/>
    </location>
</feature>
<feature type="mutagenesis site" description="In n1654; lethal at the restrictive temperature of 25 degrees Celsius. Protruding vulva phenotype observed in 26% of animals and abnormal folding and/or overmigration of the gonad arms in 18% and 47%, respectively. Abnormal migration and axonal pathfinding of hermaphrodite specific neurons (HSN) during embryogenesis and reduced expression of several genes encoding components of the serotonin synthesis and transport pathways. Germ lines are smaller. Expression of sem-4 and ham-2 is severely affected in the HSNs, while unc-86 expression is barely affected." evidence="4 6">
    <location>
        <begin position="22"/>
        <end position="446"/>
    </location>
</feature>
<keyword id="KW-0156">Chromatin regulator</keyword>
<keyword id="KW-0539">Nucleus</keyword>
<keyword id="KW-1185">Reference proteome</keyword>
<keyword id="KW-0804">Transcription</keyword>
<keyword id="KW-0805">Transcription regulation</keyword>
<comment type="function">
    <text evidence="1 5 6 7">Involved in transcriptional activation and repression of select genes by chromatin remodeling (alteration of DNA-nucleosome topology). Component of SWI/SNF chromatin remodeling complexes that carry out key enzymatic activities, changing chromatin structure by altering DNA-histone contacts within a nucleosome in an ATP-dependent manner (By similarity). Required for the blmp-1-mediated transcriptional activation or repression of several hypodermal genes such as bed-3 (PubMed:32417234). Involved in regulating differentiation, migration and axon pathfinding of specific serotonergic neurons (HSNs) (PubMed:26739451). Probably regulates vulva development through the let-60/Ras pathway (PubMed:26739451). May be involved in regulation of developmental processes in the embryo driven by the Wnt pathway (PubMed:26739451). Involved in gonadogenesis (PubMed:24402584, PubMed:26739451).</text>
</comment>
<comment type="subunit">
    <text evidence="7 10">Component of the multiprotein chromatin-remodeling complexes SWI/SNF: SWI/SNF-A (BAF), SWI/SNF-B (PBAF) and related complexes (Probable). The canonical complex contains a catalytic subunit swsn-4, core subunits swsn-1 and swsn-5, and accessory subunits swsn-3, swsn-6, phf-10, dpff-1, swsn-9 and either ham-3/swsn-2.1 or swsn-2.2 (Probable). May interact with blmp-1 (PubMed:32417234).</text>
</comment>
<comment type="subcellular location">
    <subcellularLocation>
        <location evidence="1">Nucleus</location>
    </subcellularLocation>
</comment>
<comment type="tissue specificity">
    <text evidence="4">Broadly expressed in all cell types.</text>
</comment>
<comment type="developmental stage">
    <text evidence="4">First observed after gastrulation and persists into the first larval stages and in the adult.</text>
</comment>
<comment type="disruption phenotype">
    <text evidence="4 5 6 7">RNAi-mediated knockdown at the L1 larval stage reduces brood size (PubMed:26739451). RNAi-mediated knockdown reduces expression of tph-1, which encodes a component of the serotonin synthesis pathway (PubMed:23457234). RNAi-mediated knockdown reduces the level of bed-3 and col-124 mRNAs and increases the level of lin-29 mRNA (PubMed:32417234). Simultaneous knockouts of swsn-2.2 do not survive beyond the L2 larval stage (PubMed:24402584). Simultaneous RNAi-mediated knockdown of swsn-2.2 at the L1 larval stage causes sterility, while at the L3 larval stage, causes embryonic lethality for the progeny (PubMed:26739451). The sterile animals resulting from simultaneous RNAi-mediated knockdown of swsn-2.2 at the L1 larval stage develop smaller germ lines (PubMed:26739451). Simultaneous RNAi-mediated knockdown of swsn-2.2 also results in vulva protrusion and ectopic expression of egl-17 in cells derived from the vulval precursor cells P5.p and P7.p (PubMed:26739451).</text>
</comment>
<comment type="similarity">
    <text evidence="9">Belongs to the SMARCD family.</text>
</comment>
<name>SWIC1_CAEEL</name>
<proteinExistence type="evidence at protein level"/>
<organism evidence="11">
    <name type="scientific">Caenorhabditis elegans</name>
    <dbReference type="NCBI Taxonomy" id="6239"/>
    <lineage>
        <taxon>Eukaryota</taxon>
        <taxon>Metazoa</taxon>
        <taxon>Ecdysozoa</taxon>
        <taxon>Nematoda</taxon>
        <taxon>Chromadorea</taxon>
        <taxon>Rhabditida</taxon>
        <taxon>Rhabditina</taxon>
        <taxon>Rhabditomorpha</taxon>
        <taxon>Rhabditoidea</taxon>
        <taxon>Rhabditidae</taxon>
        <taxon>Peloderinae</taxon>
        <taxon>Caenorhabditis</taxon>
    </lineage>
</organism>
<sequence>MQTQARPPVPQGPRFNHPATPQQVRRPINAPLPGQTAQIQGNRGPQPPKKKKRYADKLIQPKVRELVPESQAYMDLLAFEQKLDSTITRKKIDVQEALKRPQKIKKRLRIYISHTFIAGKEPEKEGDDASVPMWELRVEGRLLDDMQHPTVGANPRPAPKRKFSSFFKSLVIELDKDIYGPDNHLVEWHRTPQTNETDGFQVKRPGDRPVKCTILLLLDYQPMKFKLHPRLAKVLGIAAETRPRIIEALWQYIKTHKLQDPQDRDTINNDLFLEQCFGVSKMRFMEIPQRLHQLLQQPDPLVLNHIIQRPDDGQDKTSACYDIDVELEDPVKQQMANFVHNQTNANDIQLLDQKIFDLVDQINEMKLRRDFFLRFSNEPSGFIKKWVVSQNSDLKTLTESSGDGESDRYATTYSTTDTDEGVSRYMYQKIQQKRAELEQSLGIRNN</sequence>
<dbReference type="EMBL" id="BX284603">
    <property type="protein sequence ID" value="CAA87424.1"/>
    <property type="molecule type" value="Genomic_DNA"/>
</dbReference>
<dbReference type="PIR" id="T27696">
    <property type="entry name" value="T27696"/>
</dbReference>
<dbReference type="RefSeq" id="NP_499250.1">
    <property type="nucleotide sequence ID" value="NM_066849.6"/>
</dbReference>
<dbReference type="SMR" id="Q09646"/>
<dbReference type="ComplexPortal" id="CPX-1030">
    <property type="entry name" value="BAF chromatin remodeling complex"/>
</dbReference>
<dbReference type="ComplexPortal" id="CPX-1031">
    <property type="entry name" value="PBAF chromatin remodeling complex"/>
</dbReference>
<dbReference type="FunCoup" id="Q09646">
    <property type="interactions" value="2886"/>
</dbReference>
<dbReference type="IntAct" id="Q09646">
    <property type="interactions" value="3"/>
</dbReference>
<dbReference type="STRING" id="6239.ZK1128.5.1"/>
<dbReference type="PaxDb" id="6239-ZK1128.5"/>
<dbReference type="PeptideAtlas" id="Q09646"/>
<dbReference type="EnsemblMetazoa" id="ZK1128.5.1">
    <property type="protein sequence ID" value="ZK1128.5.1"/>
    <property type="gene ID" value="WBGene00044072"/>
</dbReference>
<dbReference type="GeneID" id="176426"/>
<dbReference type="KEGG" id="cel:CELE_ZK1128.5"/>
<dbReference type="UCSC" id="ZK1128.5">
    <property type="organism name" value="c. elegans"/>
</dbReference>
<dbReference type="AGR" id="WB:WBGene00044072"/>
<dbReference type="CTD" id="176426"/>
<dbReference type="WormBase" id="ZK1128.5">
    <property type="protein sequence ID" value="CE01687"/>
    <property type="gene ID" value="WBGene00044072"/>
    <property type="gene designation" value="ham-3"/>
</dbReference>
<dbReference type="eggNOG" id="KOG2570">
    <property type="taxonomic scope" value="Eukaryota"/>
</dbReference>
<dbReference type="GeneTree" id="ENSGT00970000196486"/>
<dbReference type="HOGENOM" id="CLU_023529_0_2_1"/>
<dbReference type="InParanoid" id="Q09646"/>
<dbReference type="OMA" id="VMDSKHH"/>
<dbReference type="OrthoDB" id="10263741at2759"/>
<dbReference type="PhylomeDB" id="Q09646"/>
<dbReference type="Reactome" id="R-CEL-8939243">
    <property type="pathway name" value="RUNX1 interacts with co-factors whose precise effect on RUNX1 targets is not known"/>
</dbReference>
<dbReference type="PRO" id="PR:Q09646"/>
<dbReference type="Proteomes" id="UP000001940">
    <property type="component" value="Chromosome III"/>
</dbReference>
<dbReference type="Bgee" id="WBGene00044072">
    <property type="expression patterns" value="Expressed in pharyngeal muscle cell (C elegans) and 4 other cell types or tissues"/>
</dbReference>
<dbReference type="GO" id="GO:0005634">
    <property type="term" value="C:nucleus"/>
    <property type="evidence" value="ECO:0007005"/>
    <property type="project" value="WormBase"/>
</dbReference>
<dbReference type="GO" id="GO:0016514">
    <property type="term" value="C:SWI/SNF complex"/>
    <property type="evidence" value="ECO:0000250"/>
    <property type="project" value="WormBase"/>
</dbReference>
<dbReference type="GO" id="GO:0140297">
    <property type="term" value="F:DNA-binding transcription factor binding"/>
    <property type="evidence" value="ECO:0000353"/>
    <property type="project" value="UniProtKB"/>
</dbReference>
<dbReference type="GO" id="GO:0061629">
    <property type="term" value="F:RNA polymerase II-specific DNA-binding transcription factor binding"/>
    <property type="evidence" value="ECO:0000250"/>
    <property type="project" value="WormBase"/>
</dbReference>
<dbReference type="GO" id="GO:0003713">
    <property type="term" value="F:transcription coactivator activity"/>
    <property type="evidence" value="ECO:0000315"/>
    <property type="project" value="UniProtKB"/>
</dbReference>
<dbReference type="GO" id="GO:0003712">
    <property type="term" value="F:transcription coregulator activity"/>
    <property type="evidence" value="ECO:0000318"/>
    <property type="project" value="GO_Central"/>
</dbReference>
<dbReference type="GO" id="GO:0003714">
    <property type="term" value="F:transcription corepressor activity"/>
    <property type="evidence" value="ECO:0000315"/>
    <property type="project" value="UniProtKB"/>
</dbReference>
<dbReference type="GO" id="GO:0006338">
    <property type="term" value="P:chromatin remodeling"/>
    <property type="evidence" value="ECO:0000303"/>
    <property type="project" value="ComplexPortal"/>
</dbReference>
<dbReference type="GO" id="GO:0008340">
    <property type="term" value="P:determination of adult lifespan"/>
    <property type="evidence" value="ECO:0000315"/>
    <property type="project" value="UniProtKB"/>
</dbReference>
<dbReference type="GO" id="GO:0000122">
    <property type="term" value="P:negative regulation of transcription by RNA polymerase II"/>
    <property type="evidence" value="ECO:0000315"/>
    <property type="project" value="UniProtKB"/>
</dbReference>
<dbReference type="GO" id="GO:0045893">
    <property type="term" value="P:positive regulation of DNA-templated transcription"/>
    <property type="evidence" value="ECO:0000315"/>
    <property type="project" value="UniProtKB"/>
</dbReference>
<dbReference type="GO" id="GO:2000781">
    <property type="term" value="P:positive regulation of double-strand break repair"/>
    <property type="evidence" value="ECO:0000303"/>
    <property type="project" value="ComplexPortal"/>
</dbReference>
<dbReference type="GO" id="GO:0045944">
    <property type="term" value="P:positive regulation of transcription by RNA polymerase II"/>
    <property type="evidence" value="ECO:0000315"/>
    <property type="project" value="UniProtKB"/>
</dbReference>
<dbReference type="GO" id="GO:2000045">
    <property type="term" value="P:regulation of G1/S transition of mitotic cell cycle"/>
    <property type="evidence" value="ECO:0000303"/>
    <property type="project" value="ComplexPortal"/>
</dbReference>
<dbReference type="GO" id="GO:0030071">
    <property type="term" value="P:regulation of mitotic metaphase/anaphase transition"/>
    <property type="evidence" value="ECO:0000303"/>
    <property type="project" value="ComplexPortal"/>
</dbReference>
<dbReference type="GO" id="GO:2000819">
    <property type="term" value="P:regulation of nucleotide-excision repair"/>
    <property type="evidence" value="ECO:0000303"/>
    <property type="project" value="ComplexPortal"/>
</dbReference>
<dbReference type="GO" id="GO:0006357">
    <property type="term" value="P:regulation of transcription by RNA polymerase II"/>
    <property type="evidence" value="ECO:0000250"/>
    <property type="project" value="WormBase"/>
</dbReference>
<dbReference type="FunFam" id="1.10.245.10:FF:000006">
    <property type="entry name" value="SWI/SNF nucleosome remodeling complex component"/>
    <property type="match status" value="1"/>
</dbReference>
<dbReference type="Gene3D" id="1.10.245.10">
    <property type="entry name" value="SWIB/MDM2 domain"/>
    <property type="match status" value="1"/>
</dbReference>
<dbReference type="InterPro" id="IPR019835">
    <property type="entry name" value="SWIB_domain"/>
</dbReference>
<dbReference type="InterPro" id="IPR036885">
    <property type="entry name" value="SWIB_MDM2_dom_sf"/>
</dbReference>
<dbReference type="InterPro" id="IPR003121">
    <property type="entry name" value="SWIB_MDM2_domain"/>
</dbReference>
<dbReference type="PANTHER" id="PTHR13844">
    <property type="entry name" value="SWI/SNF-RELATED MATRIX-ASSOCIATED ACTIN-DEPENDENT REGULATOR OF CHROMATIN SUBFAMILY D"/>
    <property type="match status" value="1"/>
</dbReference>
<dbReference type="Pfam" id="PF02201">
    <property type="entry name" value="SWIB"/>
    <property type="match status" value="1"/>
</dbReference>
<dbReference type="SMART" id="SM00151">
    <property type="entry name" value="SWIB"/>
    <property type="match status" value="1"/>
</dbReference>
<dbReference type="SUPFAM" id="SSF47592">
    <property type="entry name" value="SWIB/MDM2 domain"/>
    <property type="match status" value="1"/>
</dbReference>
<dbReference type="PROSITE" id="PS51925">
    <property type="entry name" value="SWIB_MDM2"/>
    <property type="match status" value="1"/>
</dbReference>
<reference evidence="11" key="1">
    <citation type="journal article" date="1998" name="Science">
        <title>Genome sequence of the nematode C. elegans: a platform for investigating biology.</title>
        <authorList>
            <consortium name="The C. elegans sequencing consortium"/>
        </authorList>
    </citation>
    <scope>NUCLEOTIDE SEQUENCE [LARGE SCALE GENOMIC DNA]</scope>
    <source>
        <strain evidence="11">Bristol N2</strain>
    </source>
</reference>
<reference evidence="9" key="2">
    <citation type="journal article" date="2013" name="Genetics">
        <title>The SWI/SNF chromatin remodeling complex selectively affects multiple aspects of serotonergic neuron differentiation.</title>
        <authorList>
            <person name="Weinberg P."/>
            <person name="Flames N."/>
            <person name="Sawa H."/>
            <person name="Garriga G."/>
            <person name="Hobert O."/>
        </authorList>
    </citation>
    <scope>TISSUE SPECIFICITY</scope>
    <scope>DEVELOPMENTAL STAGE</scope>
    <scope>DISRUPTION PHENOTYPE</scope>
    <scope>MUTAGENESIS OF 22-GLN--ASN-446</scope>
</reference>
<reference evidence="9" key="3">
    <citation type="journal article" date="2014" name="G3 (Bethesda)">
        <title>Caenorhabditis elegans SWI/SNF subunits control sequential developmental stages in the somatic gonad.</title>
        <authorList>
            <person name="Large E.E."/>
            <person name="Mathies L.D."/>
        </authorList>
    </citation>
    <scope>FUNCTION</scope>
</reference>
<reference evidence="9" key="4">
    <citation type="journal article" date="2016" name="Genetics">
        <title>Functional Interplay of Two Paralogs Encoding SWI/SNF Chromatin-Remodeling Accessory Subunits During Caenorhabditis elegans Development.</title>
        <authorList>
            <person name="Ertl I."/>
            <person name="Porta-de-la-Riva M."/>
            <person name="Gomez-Orte E."/>
            <person name="Rubio-Pena K."/>
            <person name="Aristizabal-Corrales D."/>
            <person name="Cornes E."/>
            <person name="Fontrodona L."/>
            <person name="Osteikoetxea X."/>
            <person name="Ayuso C."/>
            <person name="Askjaer P."/>
            <person name="Cabello J."/>
            <person name="Ceron J."/>
        </authorList>
    </citation>
    <scope>FUNCTION</scope>
    <scope>IDENTIFICATION IN THE SWI/SNF COMPLEX</scope>
    <scope>DISRUPTION PHENOTYPE</scope>
    <scope>MUTAGENESIS OF 22-GLN--ASN-446</scope>
</reference>
<reference evidence="9" key="5">
    <citation type="journal article" date="2020" name="Biochim. Biophys. Acta">
        <title>LDB1 and the SWI/SNF complex participate in both transcriptional activation and repression by Caenorhabditis elegans BLIMP1/PRDM1.</title>
        <authorList>
            <person name="Fong H.T."/>
            <person name="Hagen T."/>
            <person name="Inoue T."/>
        </authorList>
    </citation>
    <scope>FUNCTION</scope>
    <scope>INTERACTION WITH BLMP-1</scope>
    <scope>DISRUPTION PHENOTYPE</scope>
</reference>
<protein>
    <recommendedName>
        <fullName evidence="9">SWI/SNF chromatin-remodeling accessory subunit 1</fullName>
    </recommendedName>
    <alternativeName>
        <fullName evidence="12">Abnormal HSN migration protein 3</fullName>
    </alternativeName>
</protein>
<gene>
    <name evidence="12" type="primary">ham-3</name>
    <name evidence="8" type="synonym">swsn-2.1</name>
    <name evidence="8" type="synonym">tag-246</name>
    <name evidence="12" type="ORF">ZK1128.5</name>
</gene>
<evidence type="ECO:0000250" key="1">
    <source>
        <dbReference type="UniProtKB" id="Q96GM5"/>
    </source>
</evidence>
<evidence type="ECO:0000255" key="2">
    <source>
        <dbReference type="PROSITE-ProRule" id="PRU01273"/>
    </source>
</evidence>
<evidence type="ECO:0000256" key="3">
    <source>
        <dbReference type="SAM" id="MobiDB-lite"/>
    </source>
</evidence>
<evidence type="ECO:0000269" key="4">
    <source>
    </source>
</evidence>
<evidence type="ECO:0000269" key="5">
    <source>
    </source>
</evidence>
<evidence type="ECO:0000269" key="6">
    <source>
    </source>
</evidence>
<evidence type="ECO:0000269" key="7">
    <source>
    </source>
</evidence>
<evidence type="ECO:0000303" key="8">
    <source>
    </source>
</evidence>
<evidence type="ECO:0000305" key="9"/>
<evidence type="ECO:0000305" key="10">
    <source>
    </source>
</evidence>
<evidence type="ECO:0000312" key="11">
    <source>
        <dbReference type="Proteomes" id="UP000001940"/>
    </source>
</evidence>
<evidence type="ECO:0000312" key="12">
    <source>
        <dbReference type="WormBase" id="ZK1128.5"/>
    </source>
</evidence>
<accession>Q09646</accession>